<sequence length="932" mass="98903">MTELKAKGPRAPHVAGGPPSPEVGSPLLCRPAAGQFPGSQTSDTLPEVSAIPISLDGLLFPRPCQGQDPSYEKTQDQQSLSDVEGAYSRAEATRGAGGSSSSPPEKESGLLDSVLDTLLAPSGPRQSQPSPPACEVTSSWSLFGPELPEDPPAAPATQGVLSPLMSRSGGKAGDSSGTAAAHKVLPQGLSPSRQLLLPASGSPHWSGAPVKPSPQPAAVEVEEEDGSESEDSAGPLLKGKPRALGGAAAGGAAAVPPGAAAGGVALVPKEDSRFSAPRVALVEQDAPMAPGRSPLATTVMDFIHVPILPLNHALLAARTRQLLEDENYDGGAGAASAFAPPRSSPSASSTPVAVGDFPDCAYPPDVEPKDDAYPLYGDFQPPALKIKEEEEGAEASARTPRSYLVAGANPAAFPDFPLGPPPPLPPRAPPSRPGEAAVTAAPASASVSSASSSGSTLECILYKAEGAPPQQGPFAPPPSKAPGAGGCLPPRDGLPSTAASASAAGAAPALYPALRLNGLPQLGYQAAVLKEGLPQVYPPYLNYLRPDSEASQSPQYSFESLPQKICLICGDEASGCHYGVLTCGSCKVFFKRAMEGQHNYLCAGRNDCIVDKIRRKNCPACRLRKCCQAGMVLGGRKFKKFNKVRVVRALDAVALPQPVGIPNESQVLSQRITFSPGQDIQLIPPLINLLMSIEPDVIYAGHDNTKPDTSSSLLTSLNQLGERQLLSVVKWSKSLPGFRNLHIDDQITLIQYSWMSLMVFGLGWRSYKHVSGQMLYFAPDLILNEQRMKESSFYSLCLTMWQIPQEFVKLQVSQEEFLCMKVLLLLNTIPLEGLRSQTQFEEMRASYIRELIKAIGLRQKGVVSSSQRFYQLTKLLDNLHDLVKQLHLYCLNTFIQSRALSVEFPEMMSEVIAAQLPKILAGMVKPLLFHKK</sequence>
<keyword id="KW-0963">Cytoplasm</keyword>
<keyword id="KW-0238">DNA-binding</keyword>
<keyword id="KW-1017">Isopeptide bond</keyword>
<keyword id="KW-0446">Lipid-binding</keyword>
<keyword id="KW-0449">Lipoprotein</keyword>
<keyword id="KW-0479">Metal-binding</keyword>
<keyword id="KW-0539">Nucleus</keyword>
<keyword id="KW-0564">Palmitate</keyword>
<keyword id="KW-0597">Phosphoprotein</keyword>
<keyword id="KW-0675">Receptor</keyword>
<keyword id="KW-0754">Steroid-binding</keyword>
<keyword id="KW-0804">Transcription</keyword>
<keyword id="KW-0805">Transcription regulation</keyword>
<keyword id="KW-0832">Ubl conjugation</keyword>
<keyword id="KW-0862">Zinc</keyword>
<keyword id="KW-0863">Zinc-finger</keyword>
<gene>
    <name type="primary">PGR</name>
    <name type="synonym">NR3C3</name>
</gene>
<accession>A7X8C2</accession>
<proteinExistence type="inferred from homology"/>
<evidence type="ECO:0000250" key="1"/>
<evidence type="ECO:0000250" key="2">
    <source>
        <dbReference type="UniProtKB" id="P06401"/>
    </source>
</evidence>
<evidence type="ECO:0000250" key="3">
    <source>
        <dbReference type="UniProtKB" id="Q00175"/>
    </source>
</evidence>
<evidence type="ECO:0000255" key="4"/>
<evidence type="ECO:0000255" key="5">
    <source>
        <dbReference type="PROSITE-ProRule" id="PRU00407"/>
    </source>
</evidence>
<evidence type="ECO:0000255" key="6">
    <source>
        <dbReference type="PROSITE-ProRule" id="PRU01189"/>
    </source>
</evidence>
<evidence type="ECO:0000256" key="7">
    <source>
        <dbReference type="SAM" id="MobiDB-lite"/>
    </source>
</evidence>
<evidence type="ECO:0000305" key="8"/>
<name>PRGR_HYLLA</name>
<protein>
    <recommendedName>
        <fullName>Progesterone receptor</fullName>
        <shortName>PR</shortName>
    </recommendedName>
    <alternativeName>
        <fullName>Nuclear receptor subfamily 3 group C member 3</fullName>
    </alternativeName>
</protein>
<organism>
    <name type="scientific">Hylobates lar</name>
    <name type="common">Lar gibbon</name>
    <name type="synonym">White-handed gibbon</name>
    <dbReference type="NCBI Taxonomy" id="9580"/>
    <lineage>
        <taxon>Eukaryota</taxon>
        <taxon>Metazoa</taxon>
        <taxon>Chordata</taxon>
        <taxon>Craniata</taxon>
        <taxon>Vertebrata</taxon>
        <taxon>Euteleostomi</taxon>
        <taxon>Mammalia</taxon>
        <taxon>Eutheria</taxon>
        <taxon>Euarchontoglires</taxon>
        <taxon>Primates</taxon>
        <taxon>Haplorrhini</taxon>
        <taxon>Catarrhini</taxon>
        <taxon>Hylobatidae</taxon>
        <taxon>Hylobates</taxon>
    </lineage>
</organism>
<reference key="1">
    <citation type="journal article" date="2008" name="Mol. Phylogenet. Evol.">
        <title>The human progesterone receptor shows evidence of adaptive evolution associated with its ability to act as a transcription factor.</title>
        <authorList>
            <person name="Chen C."/>
            <person name="Opazo J.C."/>
            <person name="Erez O."/>
            <person name="Uddin M."/>
            <person name="Santolaya-Forgas J."/>
            <person name="Goodman M."/>
            <person name="Grossman L.I."/>
            <person name="Romero R."/>
            <person name="Wildman D.E."/>
        </authorList>
    </citation>
    <scope>NUCLEOTIDE SEQUENCE [GENOMIC DNA]</scope>
</reference>
<comment type="function">
    <text evidence="2">The steroid hormones and their receptors are involved in the regulation of eukaryotic gene expression and affect cellular proliferation and differentiation in target tissues. Transcriptional activator of several progesteron-dependent promoters in a variety of cell types. Involved in activation of SRC-dependent MAPK signaling on hormone stimulation.</text>
</comment>
<comment type="subunit">
    <text evidence="2 3">Interacts with SMARD1 and UNC45A. Interacts with CUEDC2; the interaction promotes ubiquitination, decreases sumoylation, and represses transcriptional activity. Interacts with PIAS3; the interaction promotes sumoylation of PR in a hormone-dependent manner, inhibits DNA-binding, and alters nuclear export. Interacts with SP1; the interaction requires ligand-induced phosphorylation on Ser-344 by ERK1/2-MAPK. Interacts with PRMT2. Interacts with NCOA2 and NCOA1. Interacts with KLF9. Interacts with GTF2B (By similarity).</text>
</comment>
<comment type="subcellular location">
    <subcellularLocation>
        <location>Nucleus</location>
    </subcellularLocation>
    <subcellularLocation>
        <location>Cytoplasm</location>
    </subcellularLocation>
    <text evidence="1">Nucleoplasmic shuttling is both hormone- and cell cycle-dependent. On hormone stimulation, retained in the cytoplasm in the G(1) and G(2)/M phases (By similarity).</text>
</comment>
<comment type="domain">
    <text>Composed of three domains: a modulating N-terminal domain, a DNA-binding domain and a C-terminal ligand-binding domain.</text>
</comment>
<comment type="PTM">
    <text evidence="1">Phosphorylated on multiple serine sites. Several of these sites are hormone-dependent. Phosphorylation on Ser-293 is highly hormone-dependent and modulates ubiquitination and sumoylation on Lys-387. Phosphorylation on Ser-102 and Ser-344 also requires induction by hormone. Basal phosphorylation on Ser-81, Ser-162 and Ser-190 is increased in response to progesterone and can be phosphorylated in vitro by the CDK2-A1 complex. Phosphorylation at Ser-162 and Ser-293, but not at Ser-190, is impaired during the G(2)/M phase of the cell cycle. Phosphorylation on Ser-344 by ERK1/2 MAPK is required for interaction with SP1 (By similarity).</text>
</comment>
<comment type="PTM">
    <text evidence="1">Sumoylation is hormone-dependent and represses transcriptional activity. Sumoylation on all three sites is enhanced by PIAS3. Desumoylated by SENP1. Sumoylation on Lys-387, the main site of sumoylation, is repressed by ubiquitination on the same site, and modulated by phosphorylation at Ser-293 (By similarity).</text>
</comment>
<comment type="PTM">
    <text evidence="2">Ubiquitination is hormone-dependent and represses sumoylation on the same site (By similarity). Promoted by MAPK-mediated phosphorylation on Ser-293 (By similarity). Ubiquitinated by UBR5, leading to its degradation: UBR5 specifically recognizes and binds ligand-bound PGR when it is not associated with coactivators (NCOAs) (By similarity). In presence of NCOAs, the UBR5-degron is not accessible, preventing its ubiquitination and degradation (By similarity).</text>
</comment>
<comment type="PTM">
    <text evidence="1">Palmitoylated by ZDHHC7 and ZDHHC21. Palmitoylation is required for plasma membrane targeting and for rapid intracellular signaling via ERK and AKT kinases and cAMP generation (By similarity).</text>
</comment>
<comment type="similarity">
    <text evidence="8">Belongs to the nuclear hormone receptor family.</text>
</comment>
<dbReference type="EMBL" id="DQ234984">
    <property type="protein sequence ID" value="ABB72144.1"/>
    <property type="molecule type" value="Genomic_DNA"/>
</dbReference>
<dbReference type="SMR" id="A7X8C2"/>
<dbReference type="GO" id="GO:0005737">
    <property type="term" value="C:cytoplasm"/>
    <property type="evidence" value="ECO:0007669"/>
    <property type="project" value="UniProtKB-SubCell"/>
</dbReference>
<dbReference type="GO" id="GO:0005654">
    <property type="term" value="C:nucleoplasm"/>
    <property type="evidence" value="ECO:0007669"/>
    <property type="project" value="UniProtKB-ARBA"/>
</dbReference>
<dbReference type="GO" id="GO:0003707">
    <property type="term" value="F:nuclear steroid receptor activity"/>
    <property type="evidence" value="ECO:0007669"/>
    <property type="project" value="InterPro"/>
</dbReference>
<dbReference type="GO" id="GO:0043565">
    <property type="term" value="F:sequence-specific DNA binding"/>
    <property type="evidence" value="ECO:0007669"/>
    <property type="project" value="InterPro"/>
</dbReference>
<dbReference type="GO" id="GO:0005496">
    <property type="term" value="F:steroid binding"/>
    <property type="evidence" value="ECO:0007669"/>
    <property type="project" value="UniProtKB-KW"/>
</dbReference>
<dbReference type="GO" id="GO:0008270">
    <property type="term" value="F:zinc ion binding"/>
    <property type="evidence" value="ECO:0007669"/>
    <property type="project" value="UniProtKB-KW"/>
</dbReference>
<dbReference type="CDD" id="cd07172">
    <property type="entry name" value="NR_DBD_GR_PR"/>
    <property type="match status" value="1"/>
</dbReference>
<dbReference type="CDD" id="cd07074">
    <property type="entry name" value="NR_LBD_PR"/>
    <property type="match status" value="1"/>
</dbReference>
<dbReference type="FunFam" id="1.10.565.10:FF:000004">
    <property type="entry name" value="Androgen receptor variant"/>
    <property type="match status" value="1"/>
</dbReference>
<dbReference type="FunFam" id="3.30.50.10:FF:000027">
    <property type="entry name" value="Progesterone receptor"/>
    <property type="match status" value="1"/>
</dbReference>
<dbReference type="Gene3D" id="3.30.50.10">
    <property type="entry name" value="Erythroid Transcription Factor GATA-1, subunit A"/>
    <property type="match status" value="1"/>
</dbReference>
<dbReference type="Gene3D" id="1.10.565.10">
    <property type="entry name" value="Retinoid X Receptor"/>
    <property type="match status" value="1"/>
</dbReference>
<dbReference type="InterPro" id="IPR035500">
    <property type="entry name" value="NHR-like_dom_sf"/>
</dbReference>
<dbReference type="InterPro" id="IPR000536">
    <property type="entry name" value="Nucl_hrmn_rcpt_lig-bd"/>
</dbReference>
<dbReference type="InterPro" id="IPR050200">
    <property type="entry name" value="Nuclear_hormone_rcpt_NR3"/>
</dbReference>
<dbReference type="InterPro" id="IPR001723">
    <property type="entry name" value="Nuclear_hrmn_rcpt"/>
</dbReference>
<dbReference type="InterPro" id="IPR000128">
    <property type="entry name" value="Progest_rcpt"/>
</dbReference>
<dbReference type="InterPro" id="IPR001628">
    <property type="entry name" value="Znf_hrmn_rcpt"/>
</dbReference>
<dbReference type="InterPro" id="IPR013088">
    <property type="entry name" value="Znf_NHR/GATA"/>
</dbReference>
<dbReference type="PANTHER" id="PTHR48092">
    <property type="entry name" value="KNIRPS-RELATED PROTEIN-RELATED"/>
    <property type="match status" value="1"/>
</dbReference>
<dbReference type="Pfam" id="PF00104">
    <property type="entry name" value="Hormone_recep"/>
    <property type="match status" value="1"/>
</dbReference>
<dbReference type="Pfam" id="PF02161">
    <property type="entry name" value="Prog_receptor"/>
    <property type="match status" value="1"/>
</dbReference>
<dbReference type="Pfam" id="PF00105">
    <property type="entry name" value="zf-C4"/>
    <property type="match status" value="1"/>
</dbReference>
<dbReference type="PRINTS" id="PR00544">
    <property type="entry name" value="PROGESTRONER"/>
</dbReference>
<dbReference type="PRINTS" id="PR00398">
    <property type="entry name" value="STRDHORMONER"/>
</dbReference>
<dbReference type="PRINTS" id="PR00047">
    <property type="entry name" value="STROIDFINGER"/>
</dbReference>
<dbReference type="SMART" id="SM00430">
    <property type="entry name" value="HOLI"/>
    <property type="match status" value="1"/>
</dbReference>
<dbReference type="SMART" id="SM00399">
    <property type="entry name" value="ZnF_C4"/>
    <property type="match status" value="1"/>
</dbReference>
<dbReference type="SUPFAM" id="SSF57716">
    <property type="entry name" value="Glucocorticoid receptor-like (DNA-binding domain)"/>
    <property type="match status" value="1"/>
</dbReference>
<dbReference type="SUPFAM" id="SSF48508">
    <property type="entry name" value="Nuclear receptor ligand-binding domain"/>
    <property type="match status" value="1"/>
</dbReference>
<dbReference type="PROSITE" id="PS51843">
    <property type="entry name" value="NR_LBD"/>
    <property type="match status" value="1"/>
</dbReference>
<dbReference type="PROSITE" id="PS00031">
    <property type="entry name" value="NUCLEAR_REC_DBD_1"/>
    <property type="match status" value="1"/>
</dbReference>
<dbReference type="PROSITE" id="PS51030">
    <property type="entry name" value="NUCLEAR_REC_DBD_2"/>
    <property type="match status" value="1"/>
</dbReference>
<feature type="chain" id="PRO_0000375855" description="Progesterone receptor">
    <location>
        <begin position="1"/>
        <end position="932"/>
    </location>
</feature>
<feature type="domain" description="NR LBD" evidence="6">
    <location>
        <begin position="678"/>
        <end position="912"/>
    </location>
</feature>
<feature type="DNA-binding region" description="Nuclear receptor" evidence="5">
    <location>
        <begin position="566"/>
        <end position="638"/>
    </location>
</feature>
<feature type="zinc finger region" description="NR C4-type" evidence="5">
    <location>
        <begin position="566"/>
        <end position="586"/>
    </location>
</feature>
<feature type="zinc finger region" description="NR C4-type" evidence="5">
    <location>
        <begin position="602"/>
        <end position="626"/>
    </location>
</feature>
<feature type="region of interest" description="Modulating, Pro-Rich">
    <location>
        <begin position="1"/>
        <end position="565"/>
    </location>
</feature>
<feature type="region of interest" description="Disordered" evidence="7">
    <location>
        <begin position="1"/>
        <end position="254"/>
    </location>
</feature>
<feature type="region of interest" description="AF3; mediates transcriptional activation" evidence="2">
    <location>
        <begin position="1"/>
        <end position="164"/>
    </location>
</feature>
<feature type="region of interest" description="Mediates transcriptional transrepression" evidence="2">
    <location>
        <begin position="165"/>
        <end position="304"/>
    </location>
</feature>
<feature type="region of interest" description="Disordered" evidence="7">
    <location>
        <begin position="334"/>
        <end position="356"/>
    </location>
</feature>
<feature type="region of interest" description="Disordered" evidence="7">
    <location>
        <begin position="414"/>
        <end position="451"/>
    </location>
</feature>
<feature type="region of interest" description="AF1; mediates transcriptional activation" evidence="2">
    <location>
        <begin position="455"/>
        <end position="545"/>
    </location>
</feature>
<feature type="region of interest" description="Disordered" evidence="7">
    <location>
        <begin position="468"/>
        <end position="499"/>
    </location>
</feature>
<feature type="region of interest" description="AF2; mediates transcriptional activation" evidence="2">
    <location>
        <begin position="686"/>
        <end position="932"/>
    </location>
</feature>
<feature type="short sequence motif" description="LXXL motif 1" evidence="2">
    <location>
        <begin position="55"/>
        <end position="59"/>
    </location>
</feature>
<feature type="short sequence motif" description="LXXL motif 2" evidence="2">
    <location>
        <begin position="115"/>
        <end position="119"/>
    </location>
</feature>
<feature type="short sequence motif" description="Nuclear localization signal" evidence="4">
    <location>
        <begin position="183"/>
        <end position="187"/>
    </location>
</feature>
<feature type="compositionally biased region" description="Low complexity" evidence="7">
    <location>
        <begin position="88"/>
        <end position="103"/>
    </location>
</feature>
<feature type="compositionally biased region" description="Acidic residues" evidence="7">
    <location>
        <begin position="220"/>
        <end position="231"/>
    </location>
</feature>
<feature type="compositionally biased region" description="Low complexity" evidence="7">
    <location>
        <begin position="232"/>
        <end position="254"/>
    </location>
</feature>
<feature type="compositionally biased region" description="Low complexity" evidence="7">
    <location>
        <begin position="334"/>
        <end position="349"/>
    </location>
</feature>
<feature type="compositionally biased region" description="Pro residues" evidence="7">
    <location>
        <begin position="417"/>
        <end position="432"/>
    </location>
</feature>
<feature type="compositionally biased region" description="Low complexity" evidence="7">
    <location>
        <begin position="433"/>
        <end position="451"/>
    </location>
</feature>
<feature type="compositionally biased region" description="Pro residues" evidence="7">
    <location>
        <begin position="470"/>
        <end position="480"/>
    </location>
</feature>
<feature type="binding site" evidence="2">
    <location>
        <position position="765"/>
    </location>
    <ligand>
        <name>progesterone</name>
        <dbReference type="ChEBI" id="CHEBI:17026"/>
    </ligand>
</feature>
<feature type="modified residue" description="Phosphoserine" evidence="2">
    <location>
        <position position="20"/>
    </location>
</feature>
<feature type="modified residue" description="Phosphoserine" evidence="2">
    <location>
        <position position="81"/>
    </location>
</feature>
<feature type="modified residue" description="Phosphoserine" evidence="2">
    <location>
        <position position="130"/>
    </location>
</feature>
<feature type="modified residue" description="Phosphoserine" evidence="2">
    <location>
        <position position="162"/>
    </location>
</feature>
<feature type="modified residue" description="Phosphoserine" evidence="2">
    <location>
        <position position="190"/>
    </location>
</feature>
<feature type="modified residue" description="Phosphoserine" evidence="2">
    <location>
        <position position="213"/>
    </location>
</feature>
<feature type="modified residue" description="Phosphoserine; by MAPK1" evidence="2">
    <location>
        <position position="293"/>
    </location>
</feature>
<feature type="modified residue" description="Phosphoserine; by MAPK" evidence="2">
    <location>
        <position position="344"/>
    </location>
</feature>
<feature type="modified residue" description="Phosphoserine" evidence="2">
    <location>
        <position position="675"/>
    </location>
</feature>
<feature type="cross-link" description="Glycyl lysine isopeptide (Lys-Gly) (interchain with G-Cter in SUMO); alternate" evidence="1">
    <location>
        <position position="387"/>
    </location>
</feature>
<feature type="cross-link" description="Glycyl lysine isopeptide (Lys-Gly) (interchain with G-Cter in ubiquitin); alternate" evidence="2">
    <location>
        <position position="387"/>
    </location>
</feature>
<feature type="cross-link" description="Glycyl lysine isopeptide (Lys-Gly) (interchain with G-Cter in SUMO)" evidence="1">
    <location>
        <position position="530"/>
    </location>
</feature>